<evidence type="ECO:0000255" key="1">
    <source>
        <dbReference type="HAMAP-Rule" id="MF_00201"/>
    </source>
</evidence>
<name>RECO_SALSV</name>
<sequence length="242" mass="27458">MEGWQRAFVLHSRPWSETSLMLDVFTEESGRVRLVAKGARSKRSNLKGALQPFTPLLLRYSGRGEVKTLRSAEAVSLALPLSGITLYSGLYINELLSRVLEYETRFSELFFDYLNCIQALAGTTGSPEPALRRFELALLGHLGYGVNFTHCAGSGERVDDTMTYRYREEKGFFASVVIDNNTFTGRHLKALDAREFPDVDTLRAAKRFTRMALKPYLGGKPLKSRELFRQFMPKRTVKTKKD</sequence>
<reference key="1">
    <citation type="journal article" date="2011" name="J. Bacteriol.">
        <title>Comparative genomics of 28 Salmonella enterica isolates: evidence for CRISPR-mediated adaptive sublineage evolution.</title>
        <authorList>
            <person name="Fricke W.F."/>
            <person name="Mammel M.K."/>
            <person name="McDermott P.F."/>
            <person name="Tartera C."/>
            <person name="White D.G."/>
            <person name="Leclerc J.E."/>
            <person name="Ravel J."/>
            <person name="Cebula T.A."/>
        </authorList>
    </citation>
    <scope>NUCLEOTIDE SEQUENCE [LARGE SCALE GENOMIC DNA]</scope>
    <source>
        <strain>CVM19633</strain>
    </source>
</reference>
<feature type="chain" id="PRO_1000099411" description="DNA repair protein RecO">
    <location>
        <begin position="1"/>
        <end position="242"/>
    </location>
</feature>
<organism>
    <name type="scientific">Salmonella schwarzengrund (strain CVM19633)</name>
    <dbReference type="NCBI Taxonomy" id="439843"/>
    <lineage>
        <taxon>Bacteria</taxon>
        <taxon>Pseudomonadati</taxon>
        <taxon>Pseudomonadota</taxon>
        <taxon>Gammaproteobacteria</taxon>
        <taxon>Enterobacterales</taxon>
        <taxon>Enterobacteriaceae</taxon>
        <taxon>Salmonella</taxon>
    </lineage>
</organism>
<protein>
    <recommendedName>
        <fullName evidence="1">DNA repair protein RecO</fullName>
    </recommendedName>
    <alternativeName>
        <fullName evidence="1">Recombination protein O</fullName>
    </alternativeName>
</protein>
<keyword id="KW-0227">DNA damage</keyword>
<keyword id="KW-0233">DNA recombination</keyword>
<keyword id="KW-0234">DNA repair</keyword>
<proteinExistence type="inferred from homology"/>
<accession>B4TS12</accession>
<gene>
    <name evidence="1" type="primary">recO</name>
    <name type="ordered locus">SeSA_A2822</name>
</gene>
<dbReference type="EMBL" id="CP001127">
    <property type="protein sequence ID" value="ACF92816.1"/>
    <property type="molecule type" value="Genomic_DNA"/>
</dbReference>
<dbReference type="RefSeq" id="WP_000399377.1">
    <property type="nucleotide sequence ID" value="NC_011094.1"/>
</dbReference>
<dbReference type="SMR" id="B4TS12"/>
<dbReference type="KEGG" id="sew:SeSA_A2822"/>
<dbReference type="HOGENOM" id="CLU_066645_1_0_6"/>
<dbReference type="Proteomes" id="UP000001865">
    <property type="component" value="Chromosome"/>
</dbReference>
<dbReference type="GO" id="GO:0043590">
    <property type="term" value="C:bacterial nucleoid"/>
    <property type="evidence" value="ECO:0007669"/>
    <property type="project" value="TreeGrafter"/>
</dbReference>
<dbReference type="GO" id="GO:0006310">
    <property type="term" value="P:DNA recombination"/>
    <property type="evidence" value="ECO:0007669"/>
    <property type="project" value="UniProtKB-UniRule"/>
</dbReference>
<dbReference type="GO" id="GO:0006302">
    <property type="term" value="P:double-strand break repair"/>
    <property type="evidence" value="ECO:0007669"/>
    <property type="project" value="TreeGrafter"/>
</dbReference>
<dbReference type="FunFam" id="1.20.1440.120:FF:000001">
    <property type="entry name" value="DNA repair protein RecO"/>
    <property type="match status" value="1"/>
</dbReference>
<dbReference type="FunFam" id="2.40.50.140:FF:000074">
    <property type="entry name" value="DNA repair protein RecO"/>
    <property type="match status" value="1"/>
</dbReference>
<dbReference type="Gene3D" id="2.40.50.140">
    <property type="entry name" value="Nucleic acid-binding proteins"/>
    <property type="match status" value="1"/>
</dbReference>
<dbReference type="Gene3D" id="1.20.1440.120">
    <property type="entry name" value="Recombination protein O, C-terminal domain"/>
    <property type="match status" value="1"/>
</dbReference>
<dbReference type="HAMAP" id="MF_00201">
    <property type="entry name" value="RecO"/>
    <property type="match status" value="1"/>
</dbReference>
<dbReference type="InterPro" id="IPR037278">
    <property type="entry name" value="ARFGAP/RecO"/>
</dbReference>
<dbReference type="InterPro" id="IPR022572">
    <property type="entry name" value="DNA_rep/recomb_RecO_N"/>
</dbReference>
<dbReference type="InterPro" id="IPR012340">
    <property type="entry name" value="NA-bd_OB-fold"/>
</dbReference>
<dbReference type="InterPro" id="IPR003717">
    <property type="entry name" value="RecO"/>
</dbReference>
<dbReference type="InterPro" id="IPR042242">
    <property type="entry name" value="RecO_C"/>
</dbReference>
<dbReference type="NCBIfam" id="TIGR00613">
    <property type="entry name" value="reco"/>
    <property type="match status" value="1"/>
</dbReference>
<dbReference type="PANTHER" id="PTHR33991">
    <property type="entry name" value="DNA REPAIR PROTEIN RECO"/>
    <property type="match status" value="1"/>
</dbReference>
<dbReference type="PANTHER" id="PTHR33991:SF1">
    <property type="entry name" value="DNA REPAIR PROTEIN RECO"/>
    <property type="match status" value="1"/>
</dbReference>
<dbReference type="Pfam" id="PF02565">
    <property type="entry name" value="RecO_C"/>
    <property type="match status" value="1"/>
</dbReference>
<dbReference type="Pfam" id="PF11967">
    <property type="entry name" value="RecO_N"/>
    <property type="match status" value="1"/>
</dbReference>
<dbReference type="SUPFAM" id="SSF57863">
    <property type="entry name" value="ArfGap/RecO-like zinc finger"/>
    <property type="match status" value="1"/>
</dbReference>
<dbReference type="SUPFAM" id="SSF50249">
    <property type="entry name" value="Nucleic acid-binding proteins"/>
    <property type="match status" value="1"/>
</dbReference>
<comment type="function">
    <text evidence="1">Involved in DNA repair and RecF pathway recombination.</text>
</comment>
<comment type="subunit">
    <text evidence="1">Monomer.</text>
</comment>
<comment type="similarity">
    <text evidence="1">Belongs to the RecO family.</text>
</comment>